<evidence type="ECO:0000255" key="1">
    <source>
        <dbReference type="PROSITE-ProRule" id="PRU10011"/>
    </source>
</evidence>
<evidence type="ECO:0000256" key="2">
    <source>
        <dbReference type="SAM" id="MobiDB-lite"/>
    </source>
</evidence>
<evidence type="ECO:0000305" key="3"/>
<protein>
    <recommendedName>
        <fullName>NAD-specific glutamate dehydrogenase</fullName>
        <shortName>NAD-GDH</shortName>
        <ecNumber>1.4.1.2</ecNumber>
    </recommendedName>
</protein>
<keyword id="KW-0903">Direct protein sequencing</keyword>
<keyword id="KW-0520">NAD</keyword>
<keyword id="KW-0560">Oxidoreductase</keyword>
<keyword id="KW-1185">Reference proteome</keyword>
<sequence length="1050" mass="118584">MDSPSAPVPAHKLVDRLKDQTPRHPSPQPTHVSYPKVNGNGHRVLRSATVGYVAPVFQGKAEQMKQVKNIIVQGGWIPETLVDGQIAWFYNELGIDDVYFQLENPQAVANHITSLYAAKVAAFSREDKREEIRLDMEASDHAIYIDTSEPGMTSFDGPRYEHRLESKYLDGDDTSKRFRVETFRSPGVLGQKENSKAALRCYFVYQCLFVDSNADPKETRLEVISDRMFLAKATKNTKQIYQDIIQVAVSRHGPVIEVFDIEGSEEMRLVVAFRSRTAKGIFSALSDLYHYYGVTSSRKYVEQFSNGITVMSIYLRPAANIDGKHPPLEQSIHQITKEISLLYCLPQNKFHNMFASGELSLQETIYAHCVWVFVQHFLNRLGTEYTSLIAALDPKNNSHVEILSKMKKRLRTETFTPDYILEIISSHPQLVRALYASFASVHLRVGSDYDRHLIAPTPVMEVLSDARLKEKITKDVSNEHEEMVMTAFRVFNNAVLKTNFFTPTKVALSFRLNPSFLPEVEYPKPLYGMFLVITSESRGFHLRFKDIARGGIRIVKSRSKEAYQINARNLFDENYGLASTQQRKNKDIPEGGSKGVILLDPKQQDRHREAFEKYIDSILDLLLKAETPGIKNPIVDLYGKEEILFMGPDENTADLVDWATEHARARGAPWWKSFFTGKSPRLGGIPHDSYGMTTLSVREYVKGIYRKLELDPSKIRKMQTGGPDGDLGSNEILLSNETYTAIVDGSGVLCDPNGIDKDELRRLAKARAMISNFDIAKLSKDGYRVLCDDTNVTLPNGEVVHNGTAFRNTYHLRDNGITDMFVPCGGRPESIDLSSVNKLIKDGKSTIPYIVEGANLFITQDAKLRLEEAGCIVYKDASANKGGVTSSSLEVLASLSFDDKGFVTHMCHDSRGNAPEFYQAYVKEVQNKIQDNARLEFEAIWREHEQTGLPRSVLSDKLSLAITSLDEDLQRSELWDNEKIRRSVLADALPNLLINKIGLDTIIERVPDSYLRAIFGSYLASRFVYEFGSSPSQFAFYDFMSKRMGNINKE</sequence>
<accession>P00365</accession>
<accession>Q02222</accession>
<accession>Q7RUZ7</accession>
<gene>
    <name type="primary">gdh-1</name>
    <name type="ORF">NCU00461</name>
</gene>
<feature type="chain" id="PRO_0000182732" description="NAD-specific glutamate dehydrogenase">
    <location>
        <begin position="1"/>
        <end position="1050"/>
    </location>
</feature>
<feature type="region of interest" description="Disordered" evidence="2">
    <location>
        <begin position="1"/>
        <end position="39"/>
    </location>
</feature>
<feature type="compositionally biased region" description="Basic and acidic residues" evidence="2">
    <location>
        <begin position="12"/>
        <end position="22"/>
    </location>
</feature>
<feature type="active site" evidence="1">
    <location>
        <position position="594"/>
    </location>
</feature>
<feature type="sequence conflict" description="In Ref. 3; AA sequence." evidence="3" ref="3">
    <original>SPS</original>
    <variation>APD</variation>
    <location>
        <begin position="3"/>
        <end position="5"/>
    </location>
</feature>
<feature type="sequence conflict" description="In Ref. 3; AA sequence." evidence="3" ref="3">
    <original>H</original>
    <variation>R</variation>
    <location>
        <position position="11"/>
    </location>
</feature>
<feature type="sequence conflict" description="In Ref. 3; AA sequence." evidence="3" ref="3">
    <original>HVSYPKVNGNG</original>
    <variation>VPYSKVDGGN</variation>
    <location>
        <begin position="31"/>
        <end position="41"/>
    </location>
</feature>
<feature type="sequence conflict" description="In Ref. 3; AA sequence." evidence="3" ref="3">
    <original>V</original>
    <variation>Q</variation>
    <location>
        <position position="44"/>
    </location>
</feature>
<feature type="sequence conflict" description="In Ref. 3; AA sequence." evidence="3" ref="3">
    <original>TS</original>
    <variation>ST</variation>
    <location>
        <begin position="113"/>
        <end position="114"/>
    </location>
</feature>
<feature type="sequence conflict" description="In Ref. 3; AA sequence." evidence="3" ref="3">
    <original>T</original>
    <variation>TTN</variation>
    <location>
        <position position="153"/>
    </location>
</feature>
<feature type="sequence conflict" description="In Ref. 1; AAB28355." evidence="3" ref="1">
    <location>
        <position position="154"/>
    </location>
</feature>
<feature type="sequence conflict" description="In Ref. 3; AA sequence." evidence="3" ref="3">
    <original>P</original>
    <variation>PEGDP</variation>
    <location>
        <position position="216"/>
    </location>
</feature>
<feature type="sequence conflict" description="In Ref. 3; AA sequence." evidence="3" ref="3">
    <original>LPQ</original>
    <variation>PQL</variation>
    <location>
        <begin position="345"/>
        <end position="347"/>
    </location>
</feature>
<feature type="sequence conflict" description="In Ref. 3; AA sequence." evidence="3" ref="3">
    <original>HN</original>
    <variation>NH</variation>
    <location>
        <begin position="351"/>
        <end position="352"/>
    </location>
</feature>
<feature type="sequence conflict" description="In Ref. 4; AA sequence." evidence="3" ref="4">
    <original>EVLS</original>
    <variation>SEVL</variation>
    <location>
        <begin position="461"/>
        <end position="464"/>
    </location>
</feature>
<feature type="sequence conflict" description="In Ref. 1; AAB28355." evidence="3" ref="1">
    <original>L</original>
    <variation>V</variation>
    <location>
        <position position="637"/>
    </location>
</feature>
<feature type="sequence conflict" description="In Ref. 1; AAB28355." evidence="3" ref="1">
    <original>T</original>
    <variation>I</variation>
    <location>
        <position position="660"/>
    </location>
</feature>
<feature type="sequence conflict" description="In Ref. 1; AAB28355." evidence="3" ref="1">
    <location>
        <begin position="708"/>
        <end position="709"/>
    </location>
</feature>
<feature type="sequence conflict" description="In Ref. 4; AA sequence." evidence="3" ref="4">
    <original>N</original>
    <variation>D</variation>
    <location>
        <position position="753"/>
    </location>
</feature>
<feature type="sequence conflict" description="In Ref. 5; AAA33601." evidence="3" ref="5">
    <original>D</original>
    <variation>N</variation>
    <location>
        <position position="788"/>
    </location>
</feature>
<feature type="sequence conflict" description="In Ref. 4; AA sequence." evidence="3" ref="4">
    <original>VVH</original>
    <variation>HV</variation>
    <location>
        <begin position="799"/>
        <end position="801"/>
    </location>
</feature>
<feature type="sequence conflict" description="In Ref. 4; AA sequence." evidence="3" ref="4">
    <original>ST</original>
    <variation>TS</variation>
    <location>
        <begin position="845"/>
        <end position="846"/>
    </location>
</feature>
<feature type="sequence conflict" description="In Ref. 4; AA sequence." evidence="3" ref="4">
    <original>D</original>
    <variation>N</variation>
    <location>
        <position position="909"/>
    </location>
</feature>
<feature type="sequence conflict" description="In Ref. 4; AA sequence." evidence="3" ref="4">
    <original>V</original>
    <variation>VE</variation>
    <location>
        <position position="1024"/>
    </location>
</feature>
<feature type="sequence conflict" description="In Ref. 4; AA sequence." evidence="3" ref="4">
    <location>
        <position position="1035"/>
    </location>
</feature>
<feature type="sequence conflict" description="In Ref. 4; AA sequence." evidence="3" ref="4">
    <original>DF</original>
    <variation>AD</variation>
    <location>
        <begin position="1038"/>
        <end position="1039"/>
    </location>
</feature>
<feature type="sequence conflict" description="In Ref. 1; AAB28355." evidence="3" ref="1">
    <original>S</original>
    <variation>T</variation>
    <location>
        <position position="1041"/>
    </location>
</feature>
<comment type="catalytic activity">
    <reaction>
        <text>L-glutamate + NAD(+) + H2O = 2-oxoglutarate + NH4(+) + NADH + H(+)</text>
        <dbReference type="Rhea" id="RHEA:15133"/>
        <dbReference type="ChEBI" id="CHEBI:15377"/>
        <dbReference type="ChEBI" id="CHEBI:15378"/>
        <dbReference type="ChEBI" id="CHEBI:16810"/>
        <dbReference type="ChEBI" id="CHEBI:28938"/>
        <dbReference type="ChEBI" id="CHEBI:29985"/>
        <dbReference type="ChEBI" id="CHEBI:57540"/>
        <dbReference type="ChEBI" id="CHEBI:57945"/>
        <dbReference type="EC" id="1.4.1.2"/>
    </reaction>
</comment>
<comment type="subunit">
    <text>Homotetramer.</text>
</comment>
<comment type="similarity">
    <text evidence="3">Belongs to the Glu/Leu/Phe/Val dehydrogenases family.</text>
</comment>
<comment type="sequence caution" evidence="3">
    <conflict type="erroneous initiation">
        <sequence resource="EMBL-CDS" id="EAA27544"/>
    </conflict>
    <text>Extended N-terminus.</text>
</comment>
<organism>
    <name type="scientific">Neurospora crassa (strain ATCC 24698 / 74-OR23-1A / CBS 708.71 / DSM 1257 / FGSC 987)</name>
    <dbReference type="NCBI Taxonomy" id="367110"/>
    <lineage>
        <taxon>Eukaryota</taxon>
        <taxon>Fungi</taxon>
        <taxon>Dikarya</taxon>
        <taxon>Ascomycota</taxon>
        <taxon>Pezizomycotina</taxon>
        <taxon>Sordariomycetes</taxon>
        <taxon>Sordariomycetidae</taxon>
        <taxon>Sordariales</taxon>
        <taxon>Sordariaceae</taxon>
        <taxon>Neurospora</taxon>
    </lineage>
</organism>
<proteinExistence type="evidence at protein level"/>
<reference key="1">
    <citation type="journal article" date="1993" name="Biochem. Cell Biol.">
        <title>NAD(+)-specific glutamate dehydrogenase of Neurospora crassa: cloning, complete nucleotide sequence, and gene mapping.</title>
        <authorList>
            <person name="Kapoor M."/>
            <person name="Vijayaraghavan Y."/>
            <person name="Kadonaga R."/>
            <person name="LaRue K.E."/>
        </authorList>
    </citation>
    <scope>NUCLEOTIDE SEQUENCE [GENOMIC DNA]</scope>
</reference>
<reference key="2">
    <citation type="journal article" date="2003" name="Nature">
        <title>The genome sequence of the filamentous fungus Neurospora crassa.</title>
        <authorList>
            <person name="Galagan J.E."/>
            <person name="Calvo S.E."/>
            <person name="Borkovich K.A."/>
            <person name="Selker E.U."/>
            <person name="Read N.D."/>
            <person name="Jaffe D.B."/>
            <person name="FitzHugh W."/>
            <person name="Ma L.-J."/>
            <person name="Smirnov S."/>
            <person name="Purcell S."/>
            <person name="Rehman B."/>
            <person name="Elkins T."/>
            <person name="Engels R."/>
            <person name="Wang S."/>
            <person name="Nielsen C.B."/>
            <person name="Butler J."/>
            <person name="Endrizzi M."/>
            <person name="Qui D."/>
            <person name="Ianakiev P."/>
            <person name="Bell-Pedersen D."/>
            <person name="Nelson M.A."/>
            <person name="Werner-Washburne M."/>
            <person name="Selitrennikoff C.P."/>
            <person name="Kinsey J.A."/>
            <person name="Braun E.L."/>
            <person name="Zelter A."/>
            <person name="Schulte U."/>
            <person name="Kothe G.O."/>
            <person name="Jedd G."/>
            <person name="Mewes H.-W."/>
            <person name="Staben C."/>
            <person name="Marcotte E."/>
            <person name="Greenberg D."/>
            <person name="Roy A."/>
            <person name="Foley K."/>
            <person name="Naylor J."/>
            <person name="Stange-Thomann N."/>
            <person name="Barrett R."/>
            <person name="Gnerre S."/>
            <person name="Kamal M."/>
            <person name="Kamvysselis M."/>
            <person name="Mauceli E.W."/>
            <person name="Bielke C."/>
            <person name="Rudd S."/>
            <person name="Frishman D."/>
            <person name="Krystofova S."/>
            <person name="Rasmussen C."/>
            <person name="Metzenberg R.L."/>
            <person name="Perkins D.D."/>
            <person name="Kroken S."/>
            <person name="Cogoni C."/>
            <person name="Macino G."/>
            <person name="Catcheside D.E.A."/>
            <person name="Li W."/>
            <person name="Pratt R.J."/>
            <person name="Osmani S.A."/>
            <person name="DeSouza C.P.C."/>
            <person name="Glass N.L."/>
            <person name="Orbach M.J."/>
            <person name="Berglund J.A."/>
            <person name="Voelker R."/>
            <person name="Yarden O."/>
            <person name="Plamann M."/>
            <person name="Seiler S."/>
            <person name="Dunlap J.C."/>
            <person name="Radford A."/>
            <person name="Aramayo R."/>
            <person name="Natvig D.O."/>
            <person name="Alex L.A."/>
            <person name="Mannhaupt G."/>
            <person name="Ebbole D.J."/>
            <person name="Freitag M."/>
            <person name="Paulsen I."/>
            <person name="Sachs M.S."/>
            <person name="Lander E.S."/>
            <person name="Nusbaum C."/>
            <person name="Birren B.W."/>
        </authorList>
    </citation>
    <scope>NUCLEOTIDE SEQUENCE [LARGE SCALE GENOMIC DNA]</scope>
    <source>
        <strain>ATCC 24698 / 74-OR23-1A / CBS 708.71 / DSM 1257 / FGSC 987</strain>
    </source>
</reference>
<reference key="3">
    <citation type="journal article" date="1980" name="J. Biol. Chem.">
        <title>Nicotinamide adenine dinucleotide-specific glutamate dehydrogenase of Neurospora crassa. Isolation and sequences of several cyanogen bromide peptides from the NH2-terminal portion of the peptide chain.</title>
        <authorList>
            <person name="Haberland M.E."/>
            <person name="Smith E.L."/>
        </authorList>
    </citation>
    <scope>PROTEIN SEQUENCE OF 1-44 AND 47-353</scope>
</reference>
<reference key="4">
    <citation type="journal article" date="1977" name="J. Biol. Chem.">
        <title>Nicotinamide adenine dinucleotide-specific glutamate dehydrogenase of Neurospora. IV. The COOH-terminal 669 residues of the peptide chain; comparison with other glutamate dehydrogenases.</title>
        <authorList>
            <person name="Austen B.M."/>
            <person name="Haberland M.E."/>
            <person name="Nyc J.F."/>
            <person name="Smith E.L."/>
        </authorList>
    </citation>
    <scope>PROTEIN SEQUENCE OF 381-1050</scope>
</reference>
<reference key="5">
    <citation type="journal article" date="1989" name="J. Biol. Chem.">
        <title>NAD-specific glutamate dehydrogenase of Neurospora crassa. cDNA cloning and gene expression during derepression.</title>
        <authorList>
            <person name="Vierula P.J."/>
            <person name="Kapoor M."/>
        </authorList>
    </citation>
    <scope>NUCLEOTIDE SEQUENCE [MRNA] OF 642-948</scope>
</reference>
<dbReference type="EC" id="1.4.1.2"/>
<dbReference type="EMBL" id="S66039">
    <property type="protein sequence ID" value="AAB28355.1"/>
    <property type="molecule type" value="Genomic_DNA"/>
</dbReference>
<dbReference type="EMBL" id="CM002238">
    <property type="protein sequence ID" value="EAA27544.2"/>
    <property type="status" value="ALT_INIT"/>
    <property type="molecule type" value="Genomic_DNA"/>
</dbReference>
<dbReference type="EMBL" id="M23436">
    <property type="protein sequence ID" value="AAA33601.1"/>
    <property type="molecule type" value="mRNA"/>
</dbReference>
<dbReference type="PIR" id="A92284">
    <property type="entry name" value="DENCED"/>
</dbReference>
<dbReference type="PIR" id="T46599">
    <property type="entry name" value="T46599"/>
</dbReference>
<dbReference type="RefSeq" id="XP_956780.2">
    <property type="nucleotide sequence ID" value="XM_951687.3"/>
</dbReference>
<dbReference type="SMR" id="P00365"/>
<dbReference type="FunCoup" id="P00365">
    <property type="interactions" value="82"/>
</dbReference>
<dbReference type="STRING" id="367110.P00365"/>
<dbReference type="PaxDb" id="5141-EFNCRP00000000364"/>
<dbReference type="EnsemblFungi" id="EAA27544">
    <property type="protein sequence ID" value="EAA27544"/>
    <property type="gene ID" value="NCU00461"/>
</dbReference>
<dbReference type="GeneID" id="3872927"/>
<dbReference type="KEGG" id="ncr:NCU00461"/>
<dbReference type="HOGENOM" id="CLU_005220_0_0_1"/>
<dbReference type="InParanoid" id="P00365"/>
<dbReference type="OrthoDB" id="184415at2759"/>
<dbReference type="Proteomes" id="UP000001805">
    <property type="component" value="Chromosome 3, Linkage Group III"/>
</dbReference>
<dbReference type="GO" id="GO:0005739">
    <property type="term" value="C:mitochondrion"/>
    <property type="evidence" value="ECO:0000318"/>
    <property type="project" value="GO_Central"/>
</dbReference>
<dbReference type="GO" id="GO:0004352">
    <property type="term" value="F:glutamate dehydrogenase (NAD+) activity"/>
    <property type="evidence" value="ECO:0000318"/>
    <property type="project" value="GO_Central"/>
</dbReference>
<dbReference type="GO" id="GO:0006538">
    <property type="term" value="P:glutamate catabolic process"/>
    <property type="evidence" value="ECO:0000318"/>
    <property type="project" value="GO_Central"/>
</dbReference>
<dbReference type="Gene3D" id="3.40.50.10860">
    <property type="entry name" value="Leucine Dehydrogenase, chain A, domain 1"/>
    <property type="match status" value="1"/>
</dbReference>
<dbReference type="Gene3D" id="3.40.50.720">
    <property type="entry name" value="NAD(P)-binding Rossmann-like Domain"/>
    <property type="match status" value="1"/>
</dbReference>
<dbReference type="InterPro" id="IPR046346">
    <property type="entry name" value="Aminoacid_DH-like_N_sf"/>
</dbReference>
<dbReference type="InterPro" id="IPR006096">
    <property type="entry name" value="Glu/Leu/Phe/Val/Trp_DH_C"/>
</dbReference>
<dbReference type="InterPro" id="IPR033524">
    <property type="entry name" value="Glu/Leu/Phe/Val_DH_AS"/>
</dbReference>
<dbReference type="InterPro" id="IPR036291">
    <property type="entry name" value="NAD(P)-bd_dom_sf"/>
</dbReference>
<dbReference type="InterPro" id="IPR056365">
    <property type="entry name" value="NAD-GDH_2nd"/>
</dbReference>
<dbReference type="InterPro" id="IPR016210">
    <property type="entry name" value="NAD-GDH_euk"/>
</dbReference>
<dbReference type="InterPro" id="IPR055480">
    <property type="entry name" value="NAD-GDH_N"/>
</dbReference>
<dbReference type="PANTHER" id="PTHR11606">
    <property type="entry name" value="GLUTAMATE DEHYDROGENASE"/>
    <property type="match status" value="1"/>
</dbReference>
<dbReference type="PANTHER" id="PTHR11606:SF24">
    <property type="entry name" value="NAD-SPECIFIC GLUTAMATE DEHYDROGENASE"/>
    <property type="match status" value="1"/>
</dbReference>
<dbReference type="Pfam" id="PF00208">
    <property type="entry name" value="ELFV_dehydrog"/>
    <property type="match status" value="1"/>
</dbReference>
<dbReference type="Pfam" id="PF23147">
    <property type="entry name" value="GDH2_N"/>
    <property type="match status" value="1"/>
</dbReference>
<dbReference type="Pfam" id="PF23152">
    <property type="entry name" value="GDH_2nd"/>
    <property type="match status" value="1"/>
</dbReference>
<dbReference type="PIRSF" id="PIRSF000184">
    <property type="entry name" value="GDH_NAD"/>
    <property type="match status" value="1"/>
</dbReference>
<dbReference type="SMART" id="SM00839">
    <property type="entry name" value="ELFV_dehydrog"/>
    <property type="match status" value="1"/>
</dbReference>
<dbReference type="SUPFAM" id="SSF53223">
    <property type="entry name" value="Aminoacid dehydrogenase-like, N-terminal domain"/>
    <property type="match status" value="1"/>
</dbReference>
<dbReference type="SUPFAM" id="SSF51735">
    <property type="entry name" value="NAD(P)-binding Rossmann-fold domains"/>
    <property type="match status" value="1"/>
</dbReference>
<dbReference type="PROSITE" id="PS00074">
    <property type="entry name" value="GLFV_DEHYDROGENASE"/>
    <property type="match status" value="1"/>
</dbReference>
<name>DHE2_NEUCR</name>